<keyword id="KW-0012">Acyltransferase</keyword>
<keyword id="KW-0963">Cytoplasm</keyword>
<keyword id="KW-1185">Reference proteome</keyword>
<keyword id="KW-0808">Transferase</keyword>
<dbReference type="EC" id="2.3.2.29" evidence="1"/>
<dbReference type="EMBL" id="AE004091">
    <property type="protein sequence ID" value="AAG06006.1"/>
    <property type="molecule type" value="Genomic_DNA"/>
</dbReference>
<dbReference type="PIR" id="H83318">
    <property type="entry name" value="H83318"/>
</dbReference>
<dbReference type="RefSeq" id="NP_251308.1">
    <property type="nucleotide sequence ID" value="NC_002516.2"/>
</dbReference>
<dbReference type="RefSeq" id="WP_003108766.1">
    <property type="nucleotide sequence ID" value="NZ_QZGE01000008.1"/>
</dbReference>
<dbReference type="SMR" id="Q9I0M0"/>
<dbReference type="STRING" id="208964.PA2618"/>
<dbReference type="PaxDb" id="208964-PA2618"/>
<dbReference type="DNASU" id="882324"/>
<dbReference type="GeneID" id="882324"/>
<dbReference type="KEGG" id="pae:PA2618"/>
<dbReference type="PATRIC" id="fig|208964.12.peg.2740"/>
<dbReference type="PseudoCAP" id="PA2618"/>
<dbReference type="HOGENOM" id="CLU_077607_0_0_6"/>
<dbReference type="InParanoid" id="Q9I0M0"/>
<dbReference type="OrthoDB" id="9782022at2"/>
<dbReference type="PhylomeDB" id="Q9I0M0"/>
<dbReference type="BioCyc" id="PAER208964:G1FZ6-2658-MONOMER"/>
<dbReference type="Proteomes" id="UP000002438">
    <property type="component" value="Chromosome"/>
</dbReference>
<dbReference type="GO" id="GO:0005737">
    <property type="term" value="C:cytoplasm"/>
    <property type="evidence" value="ECO:0000318"/>
    <property type="project" value="GO_Central"/>
</dbReference>
<dbReference type="GO" id="GO:0004057">
    <property type="term" value="F:arginyl-tRNA--protein transferase activity"/>
    <property type="evidence" value="ECO:0000318"/>
    <property type="project" value="GO_Central"/>
</dbReference>
<dbReference type="GO" id="GO:0008914">
    <property type="term" value="F:leucyl-tRNA--protein transferase activity"/>
    <property type="evidence" value="ECO:0007669"/>
    <property type="project" value="UniProtKB-UniRule"/>
</dbReference>
<dbReference type="GO" id="GO:0010498">
    <property type="term" value="P:proteasomal protein catabolic process"/>
    <property type="evidence" value="ECO:0000318"/>
    <property type="project" value="GO_Central"/>
</dbReference>
<dbReference type="GO" id="GO:0071596">
    <property type="term" value="P:ubiquitin-dependent protein catabolic process via the N-end rule pathway"/>
    <property type="evidence" value="ECO:0007669"/>
    <property type="project" value="InterPro"/>
</dbReference>
<dbReference type="HAMAP" id="MF_00689">
    <property type="entry name" value="Bpt"/>
    <property type="match status" value="1"/>
</dbReference>
<dbReference type="InterPro" id="IPR016181">
    <property type="entry name" value="Acyl_CoA_acyltransferase"/>
</dbReference>
<dbReference type="InterPro" id="IPR017138">
    <property type="entry name" value="Asp_Glu_LeuTrfase"/>
</dbReference>
<dbReference type="InterPro" id="IPR030700">
    <property type="entry name" value="N-end_Aminoacyl_Trfase"/>
</dbReference>
<dbReference type="InterPro" id="IPR007472">
    <property type="entry name" value="N-end_Aminoacyl_Trfase_C"/>
</dbReference>
<dbReference type="InterPro" id="IPR007471">
    <property type="entry name" value="N-end_Aminoacyl_Trfase_N"/>
</dbReference>
<dbReference type="NCBIfam" id="NF002341">
    <property type="entry name" value="PRK01305.1-1"/>
    <property type="match status" value="1"/>
</dbReference>
<dbReference type="NCBIfam" id="NF002342">
    <property type="entry name" value="PRK01305.1-3"/>
    <property type="match status" value="1"/>
</dbReference>
<dbReference type="NCBIfam" id="NF002345">
    <property type="entry name" value="PRK01305.2-2"/>
    <property type="match status" value="1"/>
</dbReference>
<dbReference type="NCBIfam" id="NF002346">
    <property type="entry name" value="PRK01305.2-3"/>
    <property type="match status" value="1"/>
</dbReference>
<dbReference type="PANTHER" id="PTHR21367">
    <property type="entry name" value="ARGININE-TRNA-PROTEIN TRANSFERASE 1"/>
    <property type="match status" value="1"/>
</dbReference>
<dbReference type="PANTHER" id="PTHR21367:SF1">
    <property type="entry name" value="ARGINYL-TRNA--PROTEIN TRANSFERASE 1"/>
    <property type="match status" value="1"/>
</dbReference>
<dbReference type="Pfam" id="PF04377">
    <property type="entry name" value="ATE_C"/>
    <property type="match status" value="1"/>
</dbReference>
<dbReference type="Pfam" id="PF04376">
    <property type="entry name" value="ATE_N"/>
    <property type="match status" value="1"/>
</dbReference>
<dbReference type="PIRSF" id="PIRSF037208">
    <property type="entry name" value="ATE_pro_prd"/>
    <property type="match status" value="1"/>
</dbReference>
<dbReference type="SUPFAM" id="SSF55729">
    <property type="entry name" value="Acyl-CoA N-acyltransferases (Nat)"/>
    <property type="match status" value="1"/>
</dbReference>
<organism>
    <name type="scientific">Pseudomonas aeruginosa (strain ATCC 15692 / DSM 22644 / CIP 104116 / JCM 14847 / LMG 12228 / 1C / PRS 101 / PAO1)</name>
    <dbReference type="NCBI Taxonomy" id="208964"/>
    <lineage>
        <taxon>Bacteria</taxon>
        <taxon>Pseudomonadati</taxon>
        <taxon>Pseudomonadota</taxon>
        <taxon>Gammaproteobacteria</taxon>
        <taxon>Pseudomonadales</taxon>
        <taxon>Pseudomonadaceae</taxon>
        <taxon>Pseudomonas</taxon>
    </lineage>
</organism>
<accession>Q9I0M0</accession>
<name>BPT_PSEAE</name>
<protein>
    <recommendedName>
        <fullName evidence="1">Aspartate/glutamate leucyltransferase</fullName>
        <ecNumber evidence="1">2.3.2.29</ecNumber>
    </recommendedName>
</protein>
<feature type="chain" id="PRO_0000195108" description="Aspartate/glutamate leucyltransferase">
    <location>
        <begin position="1"/>
        <end position="235"/>
    </location>
</feature>
<evidence type="ECO:0000255" key="1">
    <source>
        <dbReference type="HAMAP-Rule" id="MF_00689"/>
    </source>
</evidence>
<reference key="1">
    <citation type="journal article" date="2000" name="Nature">
        <title>Complete genome sequence of Pseudomonas aeruginosa PAO1, an opportunistic pathogen.</title>
        <authorList>
            <person name="Stover C.K."/>
            <person name="Pham X.-Q.T."/>
            <person name="Erwin A.L."/>
            <person name="Mizoguchi S.D."/>
            <person name="Warrener P."/>
            <person name="Hickey M.J."/>
            <person name="Brinkman F.S.L."/>
            <person name="Hufnagle W.O."/>
            <person name="Kowalik D.J."/>
            <person name="Lagrou M."/>
            <person name="Garber R.L."/>
            <person name="Goltry L."/>
            <person name="Tolentino E."/>
            <person name="Westbrock-Wadman S."/>
            <person name="Yuan Y."/>
            <person name="Brody L.L."/>
            <person name="Coulter S.N."/>
            <person name="Folger K.R."/>
            <person name="Kas A."/>
            <person name="Larbig K."/>
            <person name="Lim R.M."/>
            <person name="Smith K.A."/>
            <person name="Spencer D.H."/>
            <person name="Wong G.K.-S."/>
            <person name="Wu Z."/>
            <person name="Paulsen I.T."/>
            <person name="Reizer J."/>
            <person name="Saier M.H. Jr."/>
            <person name="Hancock R.E.W."/>
            <person name="Lory S."/>
            <person name="Olson M.V."/>
        </authorList>
    </citation>
    <scope>NUCLEOTIDE SEQUENCE [LARGE SCALE GENOMIC DNA]</scope>
    <source>
        <strain>ATCC 15692 / DSM 22644 / CIP 104116 / JCM 14847 / LMG 12228 / 1C / PRS 101 / PAO1</strain>
    </source>
</reference>
<comment type="function">
    <text evidence="1">Functions in the N-end rule pathway of protein degradation where it conjugates Leu from its aminoacyl-tRNA to the N-termini of proteins containing an N-terminal aspartate or glutamate.</text>
</comment>
<comment type="catalytic activity">
    <reaction evidence="1">
        <text>N-terminal L-glutamyl-[protein] + L-leucyl-tRNA(Leu) = N-terminal L-leucyl-L-glutamyl-[protein] + tRNA(Leu) + H(+)</text>
        <dbReference type="Rhea" id="RHEA:50412"/>
        <dbReference type="Rhea" id="RHEA-COMP:9613"/>
        <dbReference type="Rhea" id="RHEA-COMP:9622"/>
        <dbReference type="Rhea" id="RHEA-COMP:12664"/>
        <dbReference type="Rhea" id="RHEA-COMP:12668"/>
        <dbReference type="ChEBI" id="CHEBI:15378"/>
        <dbReference type="ChEBI" id="CHEBI:64721"/>
        <dbReference type="ChEBI" id="CHEBI:78442"/>
        <dbReference type="ChEBI" id="CHEBI:78494"/>
        <dbReference type="ChEBI" id="CHEBI:133041"/>
        <dbReference type="EC" id="2.3.2.29"/>
    </reaction>
</comment>
<comment type="catalytic activity">
    <reaction evidence="1">
        <text>N-terminal L-aspartyl-[protein] + L-leucyl-tRNA(Leu) = N-terminal L-leucyl-L-aspartyl-[protein] + tRNA(Leu) + H(+)</text>
        <dbReference type="Rhea" id="RHEA:50420"/>
        <dbReference type="Rhea" id="RHEA-COMP:9613"/>
        <dbReference type="Rhea" id="RHEA-COMP:9622"/>
        <dbReference type="Rhea" id="RHEA-COMP:12669"/>
        <dbReference type="Rhea" id="RHEA-COMP:12674"/>
        <dbReference type="ChEBI" id="CHEBI:15378"/>
        <dbReference type="ChEBI" id="CHEBI:64720"/>
        <dbReference type="ChEBI" id="CHEBI:78442"/>
        <dbReference type="ChEBI" id="CHEBI:78494"/>
        <dbReference type="ChEBI" id="CHEBI:133042"/>
        <dbReference type="EC" id="2.3.2.29"/>
    </reaction>
</comment>
<comment type="subcellular location">
    <subcellularLocation>
        <location evidence="1">Cytoplasm</location>
    </subcellularLocation>
</comment>
<comment type="similarity">
    <text evidence="1">Belongs to the R-transferase family. Bpt subfamily.</text>
</comment>
<proteinExistence type="inferred from homology"/>
<sequence length="235" mass="27826">MTELARLKFYATQPHPCSYLPEEQATTLFLDPSQPMDTQLYASLSEVGFRRSGDHLYRPHCQHCTACIAARIPVADFSPNRQQRRILKRNAELQVIRKRPSFNEEYYDLYRRYIEQRHADGDMYPPSRDQFATFLVRDLPFCCFFEFRLHGRLLAIAVTDVLPNGLSAVYTFYDPDEEQRSLGRYAILWQIAETERLGLQAVYLGYWIKNCRKMNYKTQYRPIELFVNQRWVALT</sequence>
<gene>
    <name evidence="1" type="primary">bpt</name>
    <name type="ordered locus">PA2618</name>
</gene>